<sequence>MLSWVVTFLVVALIAGILGFGGIAGASIEIAKVIFFIAVVLFLISAVVGLARGRTRV</sequence>
<protein>
    <recommendedName>
        <fullName evidence="1">UPF0391 membrane protein RPD_3366</fullName>
    </recommendedName>
</protein>
<comment type="subcellular location">
    <subcellularLocation>
        <location evidence="1">Cell membrane</location>
        <topology evidence="1">Multi-pass membrane protein</topology>
    </subcellularLocation>
</comment>
<comment type="similarity">
    <text evidence="1">Belongs to the UPF0391 family.</text>
</comment>
<dbReference type="EMBL" id="CP000283">
    <property type="protein sequence ID" value="ABE40590.1"/>
    <property type="molecule type" value="Genomic_DNA"/>
</dbReference>
<dbReference type="STRING" id="316057.RPD_3366"/>
<dbReference type="KEGG" id="rpd:RPD_3366"/>
<dbReference type="eggNOG" id="COG5487">
    <property type="taxonomic scope" value="Bacteria"/>
</dbReference>
<dbReference type="HOGENOM" id="CLU_187346_2_1_5"/>
<dbReference type="BioCyc" id="RPAL316057:RPD_RS22665-MONOMER"/>
<dbReference type="Proteomes" id="UP000001818">
    <property type="component" value="Chromosome"/>
</dbReference>
<dbReference type="GO" id="GO:0005886">
    <property type="term" value="C:plasma membrane"/>
    <property type="evidence" value="ECO:0007669"/>
    <property type="project" value="UniProtKB-SubCell"/>
</dbReference>
<dbReference type="HAMAP" id="MF_01361">
    <property type="entry name" value="UPF0391"/>
    <property type="match status" value="1"/>
</dbReference>
<dbReference type="InterPro" id="IPR009760">
    <property type="entry name" value="DUF1328"/>
</dbReference>
<dbReference type="NCBIfam" id="NF010228">
    <property type="entry name" value="PRK13682.1-3"/>
    <property type="match status" value="1"/>
</dbReference>
<dbReference type="NCBIfam" id="NF010229">
    <property type="entry name" value="PRK13682.1-4"/>
    <property type="match status" value="1"/>
</dbReference>
<dbReference type="Pfam" id="PF07043">
    <property type="entry name" value="DUF1328"/>
    <property type="match status" value="1"/>
</dbReference>
<dbReference type="PIRSF" id="PIRSF036466">
    <property type="entry name" value="UCP036466"/>
    <property type="match status" value="1"/>
</dbReference>
<accession>Q133Z9</accession>
<feature type="chain" id="PRO_5000112267" description="UPF0391 membrane protein RPD_3366">
    <location>
        <begin position="1"/>
        <end position="57"/>
    </location>
</feature>
<feature type="transmembrane region" description="Helical" evidence="1">
    <location>
        <begin position="4"/>
        <end position="24"/>
    </location>
</feature>
<feature type="transmembrane region" description="Helical" evidence="1">
    <location>
        <begin position="30"/>
        <end position="50"/>
    </location>
</feature>
<organism>
    <name type="scientific">Rhodopseudomonas palustris (strain BisB5)</name>
    <dbReference type="NCBI Taxonomy" id="316057"/>
    <lineage>
        <taxon>Bacteria</taxon>
        <taxon>Pseudomonadati</taxon>
        <taxon>Pseudomonadota</taxon>
        <taxon>Alphaproteobacteria</taxon>
        <taxon>Hyphomicrobiales</taxon>
        <taxon>Nitrobacteraceae</taxon>
        <taxon>Rhodopseudomonas</taxon>
    </lineage>
</organism>
<evidence type="ECO:0000255" key="1">
    <source>
        <dbReference type="HAMAP-Rule" id="MF_01361"/>
    </source>
</evidence>
<proteinExistence type="inferred from homology"/>
<keyword id="KW-1003">Cell membrane</keyword>
<keyword id="KW-0472">Membrane</keyword>
<keyword id="KW-0812">Transmembrane</keyword>
<keyword id="KW-1133">Transmembrane helix</keyword>
<gene>
    <name type="ordered locus">RPD_3366</name>
</gene>
<reference key="1">
    <citation type="submission" date="2006-03" db="EMBL/GenBank/DDBJ databases">
        <title>Complete sequence of Rhodopseudomonas palustris BisB5.</title>
        <authorList>
            <consortium name="US DOE Joint Genome Institute"/>
            <person name="Copeland A."/>
            <person name="Lucas S."/>
            <person name="Lapidus A."/>
            <person name="Barry K."/>
            <person name="Detter J.C."/>
            <person name="Glavina del Rio T."/>
            <person name="Hammon N."/>
            <person name="Israni S."/>
            <person name="Dalin E."/>
            <person name="Tice H."/>
            <person name="Pitluck S."/>
            <person name="Chain P."/>
            <person name="Malfatti S."/>
            <person name="Shin M."/>
            <person name="Vergez L."/>
            <person name="Schmutz J."/>
            <person name="Larimer F."/>
            <person name="Land M."/>
            <person name="Hauser L."/>
            <person name="Pelletier D.A."/>
            <person name="Kyrpides N."/>
            <person name="Lykidis A."/>
            <person name="Oda Y."/>
            <person name="Harwood C.S."/>
            <person name="Richardson P."/>
        </authorList>
    </citation>
    <scope>NUCLEOTIDE SEQUENCE [LARGE SCALE GENOMIC DNA]</scope>
    <source>
        <strain>BisB5</strain>
    </source>
</reference>
<name>Y3366_RHOPS</name>